<gene>
    <name type="primary">ETT1</name>
    <name type="ORF">CTRG_01366</name>
</gene>
<keyword id="KW-0539">Nucleus</keyword>
<keyword id="KW-1185">Reference proteome</keyword>
<keyword id="KW-0804">Transcription</keyword>
<keyword id="KW-0805">Transcription regulation</keyword>
<keyword id="KW-0810">Translation regulation</keyword>
<sequence>MAKRTLGLAKAAKAKKQKREEKSESPEKDSGNEEEQLTVELPEGATDEISQLIGLHQTYLQSERDNELLVNGIIHECDRLLRSNEDGKEELPAIFHSIYATALAELSKFVEEEEEEEKKEKEEQESDKKIKEFFDAALERIEIGLEKHPNDVNLLIAKSKILIDQIVLQYISPLSVDSKKKEIEVEVEKLLDTALEIYELAEVKANESKNYEVFNDLETLDILQALDDLLDIVDNFGKNNLEEEEEDEDEETEKDNGDDEDEVEIELTEDHPLYVIKTSDKYNQWWRDHTHTYLDNLKKLDSKDVLPEVLREVNHRLGQSYLQESEIPTTVFTTLKYDDEYDGAKELEGLTVEEAQKISQDLISKALKYLKGAKDEEDPETWVDIAEAMITLGNLHDIDSKEQEDLYKEAEEILKKANNATNGKFKDILENLLEN</sequence>
<accession>C5M685</accession>
<reference key="1">
    <citation type="journal article" date="2009" name="Nature">
        <title>Evolution of pathogenicity and sexual reproduction in eight Candida genomes.</title>
        <authorList>
            <person name="Butler G."/>
            <person name="Rasmussen M.D."/>
            <person name="Lin M.F."/>
            <person name="Santos M.A.S."/>
            <person name="Sakthikumar S."/>
            <person name="Munro C.A."/>
            <person name="Rheinbay E."/>
            <person name="Grabherr M."/>
            <person name="Forche A."/>
            <person name="Reedy J.L."/>
            <person name="Agrafioti I."/>
            <person name="Arnaud M.B."/>
            <person name="Bates S."/>
            <person name="Brown A.J.P."/>
            <person name="Brunke S."/>
            <person name="Costanzo M.C."/>
            <person name="Fitzpatrick D.A."/>
            <person name="de Groot P.W.J."/>
            <person name="Harris D."/>
            <person name="Hoyer L.L."/>
            <person name="Hube B."/>
            <person name="Klis F.M."/>
            <person name="Kodira C."/>
            <person name="Lennard N."/>
            <person name="Logue M.E."/>
            <person name="Martin R."/>
            <person name="Neiman A.M."/>
            <person name="Nikolaou E."/>
            <person name="Quail M.A."/>
            <person name="Quinn J."/>
            <person name="Santos M.C."/>
            <person name="Schmitzberger F.F."/>
            <person name="Sherlock G."/>
            <person name="Shah P."/>
            <person name="Silverstein K.A.T."/>
            <person name="Skrzypek M.S."/>
            <person name="Soll D."/>
            <person name="Staggs R."/>
            <person name="Stansfield I."/>
            <person name="Stumpf M.P.H."/>
            <person name="Sudbery P.E."/>
            <person name="Srikantha T."/>
            <person name="Zeng Q."/>
            <person name="Berman J."/>
            <person name="Berriman M."/>
            <person name="Heitman J."/>
            <person name="Gow N.A.R."/>
            <person name="Lorenz M.C."/>
            <person name="Birren B.W."/>
            <person name="Kellis M."/>
            <person name="Cuomo C.A."/>
        </authorList>
    </citation>
    <scope>NUCLEOTIDE SEQUENCE [LARGE SCALE GENOMIC DNA]</scope>
    <source>
        <strain>ATCC MYA-3404 / T1</strain>
    </source>
</reference>
<feature type="chain" id="PRO_0000406614" description="Enhancer of translation termination 1">
    <location>
        <begin position="1"/>
        <end position="435"/>
    </location>
</feature>
<feature type="region of interest" description="Disordered" evidence="2">
    <location>
        <begin position="1"/>
        <end position="44"/>
    </location>
</feature>
<feature type="region of interest" description="Disordered" evidence="2">
    <location>
        <begin position="239"/>
        <end position="263"/>
    </location>
</feature>
<feature type="compositionally biased region" description="Basic and acidic residues" evidence="2">
    <location>
        <begin position="18"/>
        <end position="31"/>
    </location>
</feature>
<feature type="compositionally biased region" description="Acidic residues" evidence="2">
    <location>
        <begin position="242"/>
        <end position="263"/>
    </location>
</feature>
<evidence type="ECO:0000250" key="1"/>
<evidence type="ECO:0000256" key="2">
    <source>
        <dbReference type="SAM" id="MobiDB-lite"/>
    </source>
</evidence>
<evidence type="ECO:0000305" key="3"/>
<dbReference type="EMBL" id="GG692396">
    <property type="protein sequence ID" value="EER34505.1"/>
    <property type="molecule type" value="Genomic_DNA"/>
</dbReference>
<dbReference type="RefSeq" id="XP_002547060.1">
    <property type="nucleotide sequence ID" value="XM_002547014.1"/>
</dbReference>
<dbReference type="SMR" id="C5M685"/>
<dbReference type="STRING" id="294747.C5M685"/>
<dbReference type="EnsemblFungi" id="CTRG_01366-t43_1">
    <property type="protein sequence ID" value="CTRG_01366-t43_1-p1"/>
    <property type="gene ID" value="CTRG_01366"/>
</dbReference>
<dbReference type="GeneID" id="8296427"/>
<dbReference type="KEGG" id="ctp:CTRG_01366"/>
<dbReference type="VEuPathDB" id="FungiDB:CTRG_01366"/>
<dbReference type="eggNOG" id="ENOG502QPHX">
    <property type="taxonomic scope" value="Eukaryota"/>
</dbReference>
<dbReference type="HOGENOM" id="CLU_050427_0_0_1"/>
<dbReference type="OrthoDB" id="5598057at2759"/>
<dbReference type="Proteomes" id="UP000002037">
    <property type="component" value="Unassembled WGS sequence"/>
</dbReference>
<dbReference type="GO" id="GO:0005634">
    <property type="term" value="C:nucleus"/>
    <property type="evidence" value="ECO:0007669"/>
    <property type="project" value="UniProtKB-SubCell"/>
</dbReference>
<dbReference type="GO" id="GO:2000640">
    <property type="term" value="P:positive regulation of SREBP signaling pathway"/>
    <property type="evidence" value="ECO:0007669"/>
    <property type="project" value="TreeGrafter"/>
</dbReference>
<dbReference type="GO" id="GO:0006417">
    <property type="term" value="P:regulation of translation"/>
    <property type="evidence" value="ECO:0007669"/>
    <property type="project" value="UniProtKB-KW"/>
</dbReference>
<dbReference type="InterPro" id="IPR024318">
    <property type="entry name" value="Nro1/ETT1"/>
</dbReference>
<dbReference type="PANTHER" id="PTHR28290">
    <property type="entry name" value="ENHANCER OF TRANSLATION TERMINATION 1"/>
    <property type="match status" value="1"/>
</dbReference>
<dbReference type="PANTHER" id="PTHR28290:SF1">
    <property type="entry name" value="ENHANCER OF TRANSLATION TERMINATION 1"/>
    <property type="match status" value="1"/>
</dbReference>
<dbReference type="Pfam" id="PF12753">
    <property type="entry name" value="Nro1"/>
    <property type="match status" value="1"/>
</dbReference>
<proteinExistence type="inferred from homology"/>
<comment type="function">
    <text evidence="1">Required for correct translation termination and probably involved in regulation of hypoxic gene expression.</text>
</comment>
<comment type="subcellular location">
    <subcellularLocation>
        <location evidence="1">Nucleus</location>
    </subcellularLocation>
</comment>
<comment type="similarity">
    <text evidence="3">Belongs to the ETT1 family.</text>
</comment>
<protein>
    <recommendedName>
        <fullName>Enhancer of translation termination 1</fullName>
    </recommendedName>
</protein>
<organism>
    <name type="scientific">Candida tropicalis (strain ATCC MYA-3404 / T1)</name>
    <name type="common">Yeast</name>
    <dbReference type="NCBI Taxonomy" id="294747"/>
    <lineage>
        <taxon>Eukaryota</taxon>
        <taxon>Fungi</taxon>
        <taxon>Dikarya</taxon>
        <taxon>Ascomycota</taxon>
        <taxon>Saccharomycotina</taxon>
        <taxon>Pichiomycetes</taxon>
        <taxon>Debaryomycetaceae</taxon>
        <taxon>Candida/Lodderomyces clade</taxon>
        <taxon>Candida</taxon>
    </lineage>
</organism>
<name>ETT1_CANTT</name>